<proteinExistence type="inferred from homology"/>
<sequence>MVALTEDTQANANIGRLTVQTVEIADETTAIRCLDWDRERFDIEFGLRNGTTYNSFLIKGEKIALVDTSHRKFEKLYLEIVAGLIDPNTIDYLIVSHTEPDHSGLVKDILQLAPNITIVGAKVAIQFLENMVHQPFKSLQVKSGERLDLGNGHSLEFVSAPNLHWPDTILTYDHKTGILYTCDVFGMHYCDDQTYDENFFAIEEDFKYYYDCLMGPNARSVLAALKRIENLAIKTVATGHGPLLQVHISEWLGRYKNWSLEQAKTETLVALFYAEDYGYSEHLVHILGHGCTKTGVAVELIDLNTAEPQEVRELVTQASGLVIAMPSQYSLTAQAALNTILAAVHHKQAIGLLESGGGEDEPVFPLRNKFQELGLVEAFPPILIKEAPAQTTEQLCEEAGTDIGQWLTRDRTIKQIKSINTDLEKALGRISTGLYIITTKKGEIQGAMFASWVTQASLNPLGVAIAVSKERAIESLMQVGDHFVLNVLEEDNYQGLMKHFLKRFAPGADRFAGIKTYPATDGSPILAESLAYTECEITSRMDCGDHWIIYSTVHVGRVANVHAMTAVHHRKVGNHY</sequence>
<reference key="1">
    <citation type="journal article" date="2001" name="DNA Res.">
        <title>Complete genomic sequence of the filamentous nitrogen-fixing cyanobacterium Anabaena sp. strain PCC 7120.</title>
        <authorList>
            <person name="Kaneko T."/>
            <person name="Nakamura Y."/>
            <person name="Wolk C.P."/>
            <person name="Kuritz T."/>
            <person name="Sasamoto S."/>
            <person name="Watanabe A."/>
            <person name="Iriguchi M."/>
            <person name="Ishikawa A."/>
            <person name="Kawashima K."/>
            <person name="Kimura T."/>
            <person name="Kishida Y."/>
            <person name="Kohara M."/>
            <person name="Matsumoto M."/>
            <person name="Matsuno A."/>
            <person name="Muraki A."/>
            <person name="Nakazaki N."/>
            <person name="Shimpo S."/>
            <person name="Sugimoto M."/>
            <person name="Takazawa M."/>
            <person name="Yamada M."/>
            <person name="Yasuda M."/>
            <person name="Tabata S."/>
        </authorList>
    </citation>
    <scope>NUCLEOTIDE SEQUENCE [LARGE SCALE GENOMIC DNA]</scope>
    <source>
        <strain>PCC 7120 / SAG 25.82 / UTEX 2576</strain>
    </source>
</reference>
<accession>Q8YNW5</accession>
<name>DFA1_NOSS1</name>
<feature type="chain" id="PRO_0000216793" description="Putative diflavin flavoprotein A 1">
    <location>
        <begin position="1"/>
        <end position="576"/>
    </location>
</feature>
<feature type="domain" description="Flavodoxin-like" evidence="2">
    <location>
        <begin position="269"/>
        <end position="431"/>
    </location>
</feature>
<feature type="region of interest" description="Zinc metallo-hydrolase">
    <location>
        <begin position="48"/>
        <end position="240"/>
    </location>
</feature>
<feature type="region of interest" description="Flavodoxin-reductase-like">
    <location>
        <begin position="432"/>
        <end position="576"/>
    </location>
</feature>
<feature type="binding site" evidence="1">
    <location>
        <position position="97"/>
    </location>
    <ligand>
        <name>Fe cation</name>
        <dbReference type="ChEBI" id="CHEBI:24875"/>
        <label>1</label>
    </ligand>
</feature>
<feature type="binding site" evidence="1">
    <location>
        <position position="99"/>
    </location>
    <ligand>
        <name>Fe cation</name>
        <dbReference type="ChEBI" id="CHEBI:24875"/>
        <label>1</label>
    </ligand>
</feature>
<feature type="binding site" evidence="1">
    <location>
        <position position="101"/>
    </location>
    <ligand>
        <name>Fe cation</name>
        <dbReference type="ChEBI" id="CHEBI:24875"/>
        <label>2</label>
    </ligand>
</feature>
<feature type="binding site" evidence="1">
    <location>
        <position position="164"/>
    </location>
    <ligand>
        <name>Fe cation</name>
        <dbReference type="ChEBI" id="CHEBI:24875"/>
        <label>1</label>
    </ligand>
</feature>
<feature type="binding site" evidence="1">
    <location>
        <position position="183"/>
    </location>
    <ligand>
        <name>Fe cation</name>
        <dbReference type="ChEBI" id="CHEBI:24875"/>
        <label>1</label>
    </ligand>
</feature>
<feature type="binding site" evidence="1">
    <location>
        <position position="183"/>
    </location>
    <ligand>
        <name>Fe cation</name>
        <dbReference type="ChEBI" id="CHEBI:24875"/>
        <label>2</label>
    </ligand>
</feature>
<feature type="binding site" evidence="1">
    <location>
        <position position="240"/>
    </location>
    <ligand>
        <name>Fe cation</name>
        <dbReference type="ChEBI" id="CHEBI:24875"/>
        <label>2</label>
    </ligand>
</feature>
<evidence type="ECO:0000250" key="1"/>
<evidence type="ECO:0000255" key="2">
    <source>
        <dbReference type="PROSITE-ProRule" id="PRU00088"/>
    </source>
</evidence>
<evidence type="ECO:0000305" key="3"/>
<comment type="function">
    <text evidence="1">Mediates electron transfer from NADH to oxygen, reducing it to water. This modular protein has 3 redox cofactors, in other organisms the same activity requires 2 or 3 proteins (By similarity).</text>
</comment>
<comment type="cofactor">
    <cofactor>
        <name>Fe cation</name>
        <dbReference type="ChEBI" id="CHEBI:24875"/>
    </cofactor>
    <text>Binds 2 iron ions per subunit.</text>
</comment>
<comment type="miscellaneous">
    <text evidence="1">By homology with NorV in E.coli, could be involved in nitric oxide detoxification.</text>
</comment>
<comment type="similarity">
    <text evidence="3">In the N-terminal section; belongs to the zinc metallo-hydrolase group 3 family.</text>
</comment>
<comment type="similarity">
    <text evidence="3">In the C-terminal section; belongs to the flavodoxin reductase family.</text>
</comment>
<organism>
    <name type="scientific">Nostoc sp. (strain PCC 7120 / SAG 25.82 / UTEX 2576)</name>
    <dbReference type="NCBI Taxonomy" id="103690"/>
    <lineage>
        <taxon>Bacteria</taxon>
        <taxon>Bacillati</taxon>
        <taxon>Cyanobacteriota</taxon>
        <taxon>Cyanophyceae</taxon>
        <taxon>Nostocales</taxon>
        <taxon>Nostocaceae</taxon>
        <taxon>Nostoc</taxon>
    </lineage>
</organism>
<gene>
    <name type="primary">dfa1</name>
    <name type="ordered locus">all4446</name>
</gene>
<protein>
    <recommendedName>
        <fullName>Putative diflavin flavoprotein A 1</fullName>
        <ecNumber>1.-.-.-</ecNumber>
    </recommendedName>
</protein>
<keyword id="KW-0249">Electron transport</keyword>
<keyword id="KW-0408">Iron</keyword>
<keyword id="KW-0479">Metal-binding</keyword>
<keyword id="KW-0560">Oxidoreductase</keyword>
<keyword id="KW-1185">Reference proteome</keyword>
<keyword id="KW-0813">Transport</keyword>
<dbReference type="EC" id="1.-.-.-"/>
<dbReference type="EMBL" id="BA000019">
    <property type="protein sequence ID" value="BAB76145.1"/>
    <property type="molecule type" value="Genomic_DNA"/>
</dbReference>
<dbReference type="PIR" id="AF2361">
    <property type="entry name" value="AF2361"/>
</dbReference>
<dbReference type="RefSeq" id="WP_010998579.1">
    <property type="nucleotide sequence ID" value="NZ_RSCN01000054.1"/>
</dbReference>
<dbReference type="SMR" id="Q8YNW5"/>
<dbReference type="STRING" id="103690.gene:10496495"/>
<dbReference type="KEGG" id="ana:all4446"/>
<dbReference type="eggNOG" id="COG0426">
    <property type="taxonomic scope" value="Bacteria"/>
</dbReference>
<dbReference type="eggNOG" id="COG1853">
    <property type="taxonomic scope" value="Bacteria"/>
</dbReference>
<dbReference type="OrthoDB" id="9807946at2"/>
<dbReference type="Proteomes" id="UP000002483">
    <property type="component" value="Chromosome"/>
</dbReference>
<dbReference type="GO" id="GO:0010181">
    <property type="term" value="F:FMN binding"/>
    <property type="evidence" value="ECO:0007669"/>
    <property type="project" value="InterPro"/>
</dbReference>
<dbReference type="GO" id="GO:0046872">
    <property type="term" value="F:metal ion binding"/>
    <property type="evidence" value="ECO:0007669"/>
    <property type="project" value="UniProtKB-KW"/>
</dbReference>
<dbReference type="GO" id="GO:0016646">
    <property type="term" value="F:oxidoreductase activity, acting on the CH-NH group of donors, NAD or NADP as acceptor"/>
    <property type="evidence" value="ECO:0007669"/>
    <property type="project" value="UniProtKB-ARBA"/>
</dbReference>
<dbReference type="CDD" id="cd07709">
    <property type="entry name" value="flavodiiron_proteins_MBL-fold"/>
    <property type="match status" value="1"/>
</dbReference>
<dbReference type="Gene3D" id="3.40.50.360">
    <property type="match status" value="1"/>
</dbReference>
<dbReference type="Gene3D" id="2.30.110.10">
    <property type="entry name" value="Electron Transport, Fmn-binding Protein, Chain A"/>
    <property type="match status" value="1"/>
</dbReference>
<dbReference type="Gene3D" id="3.60.15.10">
    <property type="entry name" value="Ribonuclease Z/Hydroxyacylglutathione hydrolase-like"/>
    <property type="match status" value="1"/>
</dbReference>
<dbReference type="InterPro" id="IPR002563">
    <property type="entry name" value="Flavin_Rdtase-like_dom"/>
</dbReference>
<dbReference type="InterPro" id="IPR008254">
    <property type="entry name" value="Flavodoxin/NO_synth"/>
</dbReference>
<dbReference type="InterPro" id="IPR029039">
    <property type="entry name" value="Flavoprotein-like_sf"/>
</dbReference>
<dbReference type="InterPro" id="IPR001279">
    <property type="entry name" value="Metallo-B-lactamas"/>
</dbReference>
<dbReference type="InterPro" id="IPR051285">
    <property type="entry name" value="NADH_oxidoreductase_modular"/>
</dbReference>
<dbReference type="InterPro" id="IPR045761">
    <property type="entry name" value="ODP_dom"/>
</dbReference>
<dbReference type="InterPro" id="IPR036866">
    <property type="entry name" value="RibonucZ/Hydroxyglut_hydro"/>
</dbReference>
<dbReference type="InterPro" id="IPR012349">
    <property type="entry name" value="Split_barrel_FMN-bd"/>
</dbReference>
<dbReference type="PANTHER" id="PTHR32145">
    <property type="entry name" value="DIFLAVIN FLAVOPROTEIN A 2-RELATED"/>
    <property type="match status" value="1"/>
</dbReference>
<dbReference type="PANTHER" id="PTHR32145:SF11">
    <property type="entry name" value="DIFLAVIN FLAVOPROTEIN A 2-RELATED"/>
    <property type="match status" value="1"/>
</dbReference>
<dbReference type="Pfam" id="PF01613">
    <property type="entry name" value="Flavin_Reduct"/>
    <property type="match status" value="1"/>
</dbReference>
<dbReference type="Pfam" id="PF19583">
    <property type="entry name" value="ODP"/>
    <property type="match status" value="1"/>
</dbReference>
<dbReference type="SMART" id="SM00903">
    <property type="entry name" value="Flavin_Reduct"/>
    <property type="match status" value="1"/>
</dbReference>
<dbReference type="SMART" id="SM00849">
    <property type="entry name" value="Lactamase_B"/>
    <property type="match status" value="1"/>
</dbReference>
<dbReference type="SUPFAM" id="SSF52218">
    <property type="entry name" value="Flavoproteins"/>
    <property type="match status" value="1"/>
</dbReference>
<dbReference type="SUPFAM" id="SSF50475">
    <property type="entry name" value="FMN-binding split barrel"/>
    <property type="match status" value="1"/>
</dbReference>
<dbReference type="SUPFAM" id="SSF56281">
    <property type="entry name" value="Metallo-hydrolase/oxidoreductase"/>
    <property type="match status" value="1"/>
</dbReference>
<dbReference type="PROSITE" id="PS50902">
    <property type="entry name" value="FLAVODOXIN_LIKE"/>
    <property type="match status" value="1"/>
</dbReference>